<keyword id="KW-0997">Cell inner membrane</keyword>
<keyword id="KW-1003">Cell membrane</keyword>
<keyword id="KW-0472">Membrane</keyword>
<keyword id="KW-1185">Reference proteome</keyword>
<keyword id="KW-0812">Transmembrane</keyword>
<keyword id="KW-1133">Transmembrane helix</keyword>
<gene>
    <name type="primary">sanA</name>
    <name type="ordered locus">HI_1262</name>
</gene>
<organism>
    <name type="scientific">Haemophilus influenzae (strain ATCC 51907 / DSM 11121 / KW20 / Rd)</name>
    <dbReference type="NCBI Taxonomy" id="71421"/>
    <lineage>
        <taxon>Bacteria</taxon>
        <taxon>Pseudomonadati</taxon>
        <taxon>Pseudomonadota</taxon>
        <taxon>Gammaproteobacteria</taxon>
        <taxon>Pasteurellales</taxon>
        <taxon>Pasteurellaceae</taxon>
        <taxon>Haemophilus</taxon>
    </lineage>
</organism>
<evidence type="ECO:0000250" key="1"/>
<evidence type="ECO:0000255" key="2"/>
<dbReference type="EMBL" id="L42023">
    <property type="protein sequence ID" value="AAC22915.1"/>
    <property type="molecule type" value="Genomic_DNA"/>
</dbReference>
<dbReference type="PIR" id="H64169">
    <property type="entry name" value="H64169"/>
</dbReference>
<dbReference type="RefSeq" id="NP_439417.2">
    <property type="nucleotide sequence ID" value="NC_000907.1"/>
</dbReference>
<dbReference type="STRING" id="71421.HI_1262"/>
<dbReference type="EnsemblBacteria" id="AAC22915">
    <property type="protein sequence ID" value="AAC22915"/>
    <property type="gene ID" value="HI_1262"/>
</dbReference>
<dbReference type="KEGG" id="hin:HI_1262"/>
<dbReference type="PATRIC" id="fig|71421.8.peg.1314"/>
<dbReference type="eggNOG" id="COG2949">
    <property type="taxonomic scope" value="Bacteria"/>
</dbReference>
<dbReference type="HOGENOM" id="CLU_051474_0_2_6"/>
<dbReference type="OrthoDB" id="9782395at2"/>
<dbReference type="PhylomeDB" id="P45130"/>
<dbReference type="Proteomes" id="UP000000579">
    <property type="component" value="Chromosome"/>
</dbReference>
<dbReference type="GO" id="GO:0005886">
    <property type="term" value="C:plasma membrane"/>
    <property type="evidence" value="ECO:0000318"/>
    <property type="project" value="GO_Central"/>
</dbReference>
<dbReference type="CDD" id="cd06259">
    <property type="entry name" value="YdcF-like"/>
    <property type="match status" value="1"/>
</dbReference>
<dbReference type="InterPro" id="IPR051599">
    <property type="entry name" value="Cell_Envelope_Assoc"/>
</dbReference>
<dbReference type="InterPro" id="IPR003848">
    <property type="entry name" value="DUF218"/>
</dbReference>
<dbReference type="PANTHER" id="PTHR30336">
    <property type="entry name" value="INNER MEMBRANE PROTEIN, PROBABLE PERMEASE"/>
    <property type="match status" value="1"/>
</dbReference>
<dbReference type="PANTHER" id="PTHR30336:SF0">
    <property type="entry name" value="PROTEIN SANA"/>
    <property type="match status" value="1"/>
</dbReference>
<dbReference type="Pfam" id="PF02698">
    <property type="entry name" value="DUF218"/>
    <property type="match status" value="1"/>
</dbReference>
<protein>
    <recommendedName>
        <fullName>Protein SanA homolog</fullName>
    </recommendedName>
</protein>
<comment type="function">
    <text evidence="1">Participates in the barrier function of the cell envelope.</text>
</comment>
<comment type="subcellular location">
    <subcellularLocation>
        <location>Cell inner membrane</location>
        <topology>Single-pass membrane protein</topology>
    </subcellularLocation>
</comment>
<name>SANA_HAEIN</name>
<accession>P45130</accession>
<proteinExistence type="inferred from homology"/>
<reference key="1">
    <citation type="journal article" date="1995" name="Science">
        <title>Whole-genome random sequencing and assembly of Haemophilus influenzae Rd.</title>
        <authorList>
            <person name="Fleischmann R.D."/>
            <person name="Adams M.D."/>
            <person name="White O."/>
            <person name="Clayton R.A."/>
            <person name="Kirkness E.F."/>
            <person name="Kerlavage A.R."/>
            <person name="Bult C.J."/>
            <person name="Tomb J.-F."/>
            <person name="Dougherty B.A."/>
            <person name="Merrick J.M."/>
            <person name="McKenney K."/>
            <person name="Sutton G.G."/>
            <person name="FitzHugh W."/>
            <person name="Fields C.A."/>
            <person name="Gocayne J.D."/>
            <person name="Scott J.D."/>
            <person name="Shirley R."/>
            <person name="Liu L.-I."/>
            <person name="Glodek A."/>
            <person name="Kelley J.M."/>
            <person name="Weidman J.F."/>
            <person name="Phillips C.A."/>
            <person name="Spriggs T."/>
            <person name="Hedblom E."/>
            <person name="Cotton M.D."/>
            <person name="Utterback T.R."/>
            <person name="Hanna M.C."/>
            <person name="Nguyen D.T."/>
            <person name="Saudek D.M."/>
            <person name="Brandon R.C."/>
            <person name="Fine L.D."/>
            <person name="Fritchman J.L."/>
            <person name="Fuhrmann J.L."/>
            <person name="Geoghagen N.S.M."/>
            <person name="Gnehm C.L."/>
            <person name="McDonald L.A."/>
            <person name="Small K.V."/>
            <person name="Fraser C.M."/>
            <person name="Smith H.O."/>
            <person name="Venter J.C."/>
        </authorList>
    </citation>
    <scope>NUCLEOTIDE SEQUENCE [LARGE SCALE GENOMIC DNA]</scope>
    <source>
        <strain>ATCC 51907 / DSM 11121 / KW20 / Rd</strain>
    </source>
</reference>
<feature type="chain" id="PRO_0000097580" description="Protein SanA homolog">
    <location>
        <begin position="1"/>
        <end position="244"/>
    </location>
</feature>
<feature type="topological domain" description="Cytoplasmic" evidence="2">
    <location>
        <begin position="1"/>
        <end position="31"/>
    </location>
</feature>
<feature type="transmembrane region" description="Helical" evidence="2">
    <location>
        <begin position="32"/>
        <end position="52"/>
    </location>
</feature>
<feature type="topological domain" description="Periplasmic" evidence="2">
    <location>
        <begin position="53"/>
        <end position="244"/>
    </location>
</feature>
<sequence length="244" mass="28188">MRFTKSIKFSLKCGRFFIMFTTMLVKKFSPKFTALFRTLLYAIFALIILCLLVDRGISFYVRDKIFTNIDELPFRPCALVLGTSKYTVSGKPNVYYDSRLMAAKSLIEQQKVNYLLLSGDNRTLQYNEPRAMFRDLRKMGVPKTLMFRDFAGFRTLDSVIRADKIFQVKTFTIVSQKFHCERALLIAQAHNIDAICFVAKQPELHFSTQIREVFARIKAVFDLILGVEPYFLGEPQPLPNSTTL</sequence>